<proteinExistence type="inferred from homology"/>
<feature type="chain" id="PRO_1000124473" description="Transcriptional repressor NrdR">
    <location>
        <begin position="1"/>
        <end position="159"/>
    </location>
</feature>
<feature type="domain" description="ATP-cone" evidence="1">
    <location>
        <begin position="49"/>
        <end position="139"/>
    </location>
</feature>
<feature type="zinc finger region" evidence="1">
    <location>
        <begin position="3"/>
        <end position="34"/>
    </location>
</feature>
<evidence type="ECO:0000255" key="1">
    <source>
        <dbReference type="HAMAP-Rule" id="MF_00440"/>
    </source>
</evidence>
<sequence>MRCPFCRHEDTQVVDSRVSEDGAAIRRRRRCSACDKRFTTYERVELNLPAVVKKDGSRTEFDRRKIVASMQLALRKRPVAADAIDAAVARIEYQLLATGEREVRSEKLGELVMNELRGLDTIAYVRFASVYRRFEDVSEFADVIEEFRRASPSKPSRKR</sequence>
<gene>
    <name evidence="1" type="primary">nrdR</name>
    <name type="ordered locus">BamMC406_0701</name>
</gene>
<name>NRDR_BURA4</name>
<organism>
    <name type="scientific">Burkholderia ambifaria (strain MC40-6)</name>
    <dbReference type="NCBI Taxonomy" id="398577"/>
    <lineage>
        <taxon>Bacteria</taxon>
        <taxon>Pseudomonadati</taxon>
        <taxon>Pseudomonadota</taxon>
        <taxon>Betaproteobacteria</taxon>
        <taxon>Burkholderiales</taxon>
        <taxon>Burkholderiaceae</taxon>
        <taxon>Burkholderia</taxon>
        <taxon>Burkholderia cepacia complex</taxon>
    </lineage>
</organism>
<accession>B1YTX4</accession>
<keyword id="KW-0067">ATP-binding</keyword>
<keyword id="KW-0238">DNA-binding</keyword>
<keyword id="KW-0479">Metal-binding</keyword>
<keyword id="KW-0547">Nucleotide-binding</keyword>
<keyword id="KW-0678">Repressor</keyword>
<keyword id="KW-0804">Transcription</keyword>
<keyword id="KW-0805">Transcription regulation</keyword>
<keyword id="KW-0862">Zinc</keyword>
<keyword id="KW-0863">Zinc-finger</keyword>
<comment type="function">
    <text evidence="1">Negatively regulates transcription of bacterial ribonucleotide reductase nrd genes and operons by binding to NrdR-boxes.</text>
</comment>
<comment type="cofactor">
    <cofactor evidence="1">
        <name>Zn(2+)</name>
        <dbReference type="ChEBI" id="CHEBI:29105"/>
    </cofactor>
    <text evidence="1">Binds 1 zinc ion.</text>
</comment>
<comment type="similarity">
    <text evidence="1">Belongs to the NrdR family.</text>
</comment>
<protein>
    <recommendedName>
        <fullName evidence="1">Transcriptional repressor NrdR</fullName>
    </recommendedName>
</protein>
<reference key="1">
    <citation type="submission" date="2008-04" db="EMBL/GenBank/DDBJ databases">
        <title>Complete sequence of chromosome 1 of Burkholderia ambifaria MC40-6.</title>
        <authorList>
            <person name="Copeland A."/>
            <person name="Lucas S."/>
            <person name="Lapidus A."/>
            <person name="Glavina del Rio T."/>
            <person name="Dalin E."/>
            <person name="Tice H."/>
            <person name="Pitluck S."/>
            <person name="Chain P."/>
            <person name="Malfatti S."/>
            <person name="Shin M."/>
            <person name="Vergez L."/>
            <person name="Lang D."/>
            <person name="Schmutz J."/>
            <person name="Larimer F."/>
            <person name="Land M."/>
            <person name="Hauser L."/>
            <person name="Kyrpides N."/>
            <person name="Lykidis A."/>
            <person name="Ramette A."/>
            <person name="Konstantinidis K."/>
            <person name="Tiedje J."/>
            <person name="Richardson P."/>
        </authorList>
    </citation>
    <scope>NUCLEOTIDE SEQUENCE [LARGE SCALE GENOMIC DNA]</scope>
    <source>
        <strain>MC40-6</strain>
    </source>
</reference>
<dbReference type="EMBL" id="CP001025">
    <property type="protein sequence ID" value="ACB63197.1"/>
    <property type="molecule type" value="Genomic_DNA"/>
</dbReference>
<dbReference type="RefSeq" id="WP_006754597.1">
    <property type="nucleotide sequence ID" value="NC_010551.1"/>
</dbReference>
<dbReference type="SMR" id="B1YTX4"/>
<dbReference type="GeneID" id="93083905"/>
<dbReference type="KEGG" id="bac:BamMC406_0701"/>
<dbReference type="HOGENOM" id="CLU_108412_0_0_4"/>
<dbReference type="OrthoDB" id="9807461at2"/>
<dbReference type="Proteomes" id="UP000001680">
    <property type="component" value="Chromosome 1"/>
</dbReference>
<dbReference type="GO" id="GO:0005524">
    <property type="term" value="F:ATP binding"/>
    <property type="evidence" value="ECO:0007669"/>
    <property type="project" value="UniProtKB-KW"/>
</dbReference>
<dbReference type="GO" id="GO:0003677">
    <property type="term" value="F:DNA binding"/>
    <property type="evidence" value="ECO:0007669"/>
    <property type="project" value="UniProtKB-KW"/>
</dbReference>
<dbReference type="GO" id="GO:0008270">
    <property type="term" value="F:zinc ion binding"/>
    <property type="evidence" value="ECO:0007669"/>
    <property type="project" value="UniProtKB-UniRule"/>
</dbReference>
<dbReference type="GO" id="GO:0045892">
    <property type="term" value="P:negative regulation of DNA-templated transcription"/>
    <property type="evidence" value="ECO:0007669"/>
    <property type="project" value="UniProtKB-UniRule"/>
</dbReference>
<dbReference type="HAMAP" id="MF_00440">
    <property type="entry name" value="NrdR"/>
    <property type="match status" value="1"/>
</dbReference>
<dbReference type="InterPro" id="IPR005144">
    <property type="entry name" value="ATP-cone_dom"/>
</dbReference>
<dbReference type="InterPro" id="IPR055173">
    <property type="entry name" value="NrdR-like_N"/>
</dbReference>
<dbReference type="InterPro" id="IPR003796">
    <property type="entry name" value="RNR_NrdR-like"/>
</dbReference>
<dbReference type="NCBIfam" id="TIGR00244">
    <property type="entry name" value="transcriptional regulator NrdR"/>
    <property type="match status" value="1"/>
</dbReference>
<dbReference type="PANTHER" id="PTHR30455">
    <property type="entry name" value="TRANSCRIPTIONAL REPRESSOR NRDR"/>
    <property type="match status" value="1"/>
</dbReference>
<dbReference type="PANTHER" id="PTHR30455:SF2">
    <property type="entry name" value="TRANSCRIPTIONAL REPRESSOR NRDR"/>
    <property type="match status" value="1"/>
</dbReference>
<dbReference type="Pfam" id="PF03477">
    <property type="entry name" value="ATP-cone"/>
    <property type="match status" value="1"/>
</dbReference>
<dbReference type="Pfam" id="PF22811">
    <property type="entry name" value="Zn_ribbon_NrdR"/>
    <property type="match status" value="1"/>
</dbReference>
<dbReference type="PROSITE" id="PS51161">
    <property type="entry name" value="ATP_CONE"/>
    <property type="match status" value="1"/>
</dbReference>